<accession>Q3AT74</accession>
<feature type="chain" id="PRO_1000011298" description="Probable endonuclease 4">
    <location>
        <begin position="1"/>
        <end position="282"/>
    </location>
</feature>
<feature type="binding site" evidence="1">
    <location>
        <position position="69"/>
    </location>
    <ligand>
        <name>Zn(2+)</name>
        <dbReference type="ChEBI" id="CHEBI:29105"/>
        <label>1</label>
    </ligand>
</feature>
<feature type="binding site" evidence="1">
    <location>
        <position position="109"/>
    </location>
    <ligand>
        <name>Zn(2+)</name>
        <dbReference type="ChEBI" id="CHEBI:29105"/>
        <label>1</label>
    </ligand>
</feature>
<feature type="binding site" evidence="1">
    <location>
        <position position="145"/>
    </location>
    <ligand>
        <name>Zn(2+)</name>
        <dbReference type="ChEBI" id="CHEBI:29105"/>
        <label>1</label>
    </ligand>
</feature>
<feature type="binding site" evidence="1">
    <location>
        <position position="145"/>
    </location>
    <ligand>
        <name>Zn(2+)</name>
        <dbReference type="ChEBI" id="CHEBI:29105"/>
        <label>2</label>
    </ligand>
</feature>
<feature type="binding site" evidence="1">
    <location>
        <position position="179"/>
    </location>
    <ligand>
        <name>Zn(2+)</name>
        <dbReference type="ChEBI" id="CHEBI:29105"/>
        <label>2</label>
    </ligand>
</feature>
<feature type="binding site" evidence="1">
    <location>
        <position position="182"/>
    </location>
    <ligand>
        <name>Zn(2+)</name>
        <dbReference type="ChEBI" id="CHEBI:29105"/>
        <label>3</label>
    </ligand>
</feature>
<feature type="binding site" evidence="1">
    <location>
        <position position="216"/>
    </location>
    <ligand>
        <name>Zn(2+)</name>
        <dbReference type="ChEBI" id="CHEBI:29105"/>
        <label>2</label>
    </ligand>
</feature>
<feature type="binding site" evidence="1">
    <location>
        <position position="229"/>
    </location>
    <ligand>
        <name>Zn(2+)</name>
        <dbReference type="ChEBI" id="CHEBI:29105"/>
        <label>3</label>
    </ligand>
</feature>
<feature type="binding site" evidence="1">
    <location>
        <position position="231"/>
    </location>
    <ligand>
        <name>Zn(2+)</name>
        <dbReference type="ChEBI" id="CHEBI:29105"/>
        <label>3</label>
    </ligand>
</feature>
<feature type="binding site" evidence="1">
    <location>
        <position position="261"/>
    </location>
    <ligand>
        <name>Zn(2+)</name>
        <dbReference type="ChEBI" id="CHEBI:29105"/>
        <label>2</label>
    </ligand>
</feature>
<keyword id="KW-0227">DNA damage</keyword>
<keyword id="KW-0234">DNA repair</keyword>
<keyword id="KW-0255">Endonuclease</keyword>
<keyword id="KW-0378">Hydrolase</keyword>
<keyword id="KW-0479">Metal-binding</keyword>
<keyword id="KW-0540">Nuclease</keyword>
<keyword id="KW-0862">Zinc</keyword>
<gene>
    <name evidence="1" type="primary">nfo</name>
    <name type="ordered locus">Cag_0528</name>
</gene>
<comment type="function">
    <text evidence="1">Endonuclease IV plays a role in DNA repair. It cleaves phosphodiester bonds at apurinic or apyrimidinic (AP) sites, generating a 3'-hydroxyl group and a 5'-terminal sugar phosphate.</text>
</comment>
<comment type="catalytic activity">
    <reaction evidence="1">
        <text>Endonucleolytic cleavage to 5'-phosphooligonucleotide end-products.</text>
        <dbReference type="EC" id="3.1.21.2"/>
    </reaction>
</comment>
<comment type="cofactor">
    <cofactor evidence="1">
        <name>Zn(2+)</name>
        <dbReference type="ChEBI" id="CHEBI:29105"/>
    </cofactor>
    <text evidence="1">Binds 3 Zn(2+) ions.</text>
</comment>
<comment type="similarity">
    <text evidence="1">Belongs to the AP endonuclease 2 family.</text>
</comment>
<name>END4_CHLCH</name>
<dbReference type="EC" id="3.1.21.2" evidence="1"/>
<dbReference type="EMBL" id="CP000108">
    <property type="protein sequence ID" value="ABB27801.1"/>
    <property type="molecule type" value="Genomic_DNA"/>
</dbReference>
<dbReference type="SMR" id="Q3AT74"/>
<dbReference type="STRING" id="340177.Cag_0528"/>
<dbReference type="KEGG" id="cch:Cag_0528"/>
<dbReference type="eggNOG" id="COG0648">
    <property type="taxonomic scope" value="Bacteria"/>
</dbReference>
<dbReference type="HOGENOM" id="CLU_025885_0_4_10"/>
<dbReference type="OrthoDB" id="9805666at2"/>
<dbReference type="GO" id="GO:0008833">
    <property type="term" value="F:deoxyribonuclease IV (phage-T4-induced) activity"/>
    <property type="evidence" value="ECO:0007669"/>
    <property type="project" value="UniProtKB-UniRule"/>
</dbReference>
<dbReference type="GO" id="GO:0003677">
    <property type="term" value="F:DNA binding"/>
    <property type="evidence" value="ECO:0007669"/>
    <property type="project" value="InterPro"/>
</dbReference>
<dbReference type="GO" id="GO:0003906">
    <property type="term" value="F:DNA-(apurinic or apyrimidinic site) endonuclease activity"/>
    <property type="evidence" value="ECO:0007669"/>
    <property type="project" value="TreeGrafter"/>
</dbReference>
<dbReference type="GO" id="GO:0008081">
    <property type="term" value="F:phosphoric diester hydrolase activity"/>
    <property type="evidence" value="ECO:0007669"/>
    <property type="project" value="TreeGrafter"/>
</dbReference>
<dbReference type="GO" id="GO:0008270">
    <property type="term" value="F:zinc ion binding"/>
    <property type="evidence" value="ECO:0007669"/>
    <property type="project" value="UniProtKB-UniRule"/>
</dbReference>
<dbReference type="GO" id="GO:0006284">
    <property type="term" value="P:base-excision repair"/>
    <property type="evidence" value="ECO:0007669"/>
    <property type="project" value="TreeGrafter"/>
</dbReference>
<dbReference type="CDD" id="cd00019">
    <property type="entry name" value="AP2Ec"/>
    <property type="match status" value="1"/>
</dbReference>
<dbReference type="FunFam" id="3.20.20.150:FF:000001">
    <property type="entry name" value="Probable endonuclease 4"/>
    <property type="match status" value="1"/>
</dbReference>
<dbReference type="Gene3D" id="3.20.20.150">
    <property type="entry name" value="Divalent-metal-dependent TIM barrel enzymes"/>
    <property type="match status" value="1"/>
</dbReference>
<dbReference type="HAMAP" id="MF_00152">
    <property type="entry name" value="Nfo"/>
    <property type="match status" value="1"/>
</dbReference>
<dbReference type="InterPro" id="IPR001719">
    <property type="entry name" value="AP_endonuc_2"/>
</dbReference>
<dbReference type="InterPro" id="IPR018246">
    <property type="entry name" value="AP_endonuc_F2_Zn_BS"/>
</dbReference>
<dbReference type="InterPro" id="IPR036237">
    <property type="entry name" value="Xyl_isomerase-like_sf"/>
</dbReference>
<dbReference type="InterPro" id="IPR013022">
    <property type="entry name" value="Xyl_isomerase-like_TIM-brl"/>
</dbReference>
<dbReference type="NCBIfam" id="TIGR00587">
    <property type="entry name" value="nfo"/>
    <property type="match status" value="1"/>
</dbReference>
<dbReference type="NCBIfam" id="NF002199">
    <property type="entry name" value="PRK01060.1-4"/>
    <property type="match status" value="1"/>
</dbReference>
<dbReference type="PANTHER" id="PTHR21445:SF0">
    <property type="entry name" value="APURINIC-APYRIMIDINIC ENDONUCLEASE"/>
    <property type="match status" value="1"/>
</dbReference>
<dbReference type="PANTHER" id="PTHR21445">
    <property type="entry name" value="ENDONUCLEASE IV ENDODEOXYRIBONUCLEASE IV"/>
    <property type="match status" value="1"/>
</dbReference>
<dbReference type="Pfam" id="PF01261">
    <property type="entry name" value="AP_endonuc_2"/>
    <property type="match status" value="1"/>
</dbReference>
<dbReference type="SMART" id="SM00518">
    <property type="entry name" value="AP2Ec"/>
    <property type="match status" value="1"/>
</dbReference>
<dbReference type="SUPFAM" id="SSF51658">
    <property type="entry name" value="Xylose isomerase-like"/>
    <property type="match status" value="1"/>
</dbReference>
<dbReference type="PROSITE" id="PS00729">
    <property type="entry name" value="AP_NUCLEASE_F2_1"/>
    <property type="match status" value="1"/>
</dbReference>
<dbReference type="PROSITE" id="PS00730">
    <property type="entry name" value="AP_NUCLEASE_F2_2"/>
    <property type="match status" value="1"/>
</dbReference>
<dbReference type="PROSITE" id="PS00731">
    <property type="entry name" value="AP_NUCLEASE_F2_3"/>
    <property type="match status" value="1"/>
</dbReference>
<dbReference type="PROSITE" id="PS51432">
    <property type="entry name" value="AP_NUCLEASE_F2_4"/>
    <property type="match status" value="1"/>
</dbReference>
<reference key="1">
    <citation type="submission" date="2005-08" db="EMBL/GenBank/DDBJ databases">
        <title>Complete sequence of Chlorobium chlorochromatii CaD3.</title>
        <authorList>
            <consortium name="US DOE Joint Genome Institute"/>
            <person name="Copeland A."/>
            <person name="Lucas S."/>
            <person name="Lapidus A."/>
            <person name="Barry K."/>
            <person name="Detter J.C."/>
            <person name="Glavina T."/>
            <person name="Hammon N."/>
            <person name="Israni S."/>
            <person name="Pitluck S."/>
            <person name="Bryant D."/>
            <person name="Schmutz J."/>
            <person name="Larimer F."/>
            <person name="Land M."/>
            <person name="Kyrpides N."/>
            <person name="Ivanova N."/>
            <person name="Richardson P."/>
        </authorList>
    </citation>
    <scope>NUCLEOTIDE SEQUENCE [LARGE SCALE GENOMIC DNA]</scope>
    <source>
        <strain>CaD3</strain>
    </source>
</reference>
<proteinExistence type="inferred from homology"/>
<organism>
    <name type="scientific">Chlorobium chlorochromatii (strain CaD3)</name>
    <dbReference type="NCBI Taxonomy" id="340177"/>
    <lineage>
        <taxon>Bacteria</taxon>
        <taxon>Pseudomonadati</taxon>
        <taxon>Chlorobiota</taxon>
        <taxon>Chlorobiia</taxon>
        <taxon>Chlorobiales</taxon>
        <taxon>Chlorobiaceae</taxon>
        <taxon>Chlorobium/Pelodictyon group</taxon>
        <taxon>Chlorobium</taxon>
    </lineage>
</organism>
<evidence type="ECO:0000255" key="1">
    <source>
        <dbReference type="HAMAP-Rule" id="MF_00152"/>
    </source>
</evidence>
<sequence length="282" mass="30794">MKRVGAHVSASGGVEQAPLNATAIGAKAFALFTKNQRQWKAPKLSKATIEAFQKACADGGFQPQHILPHDSYLINLGSPDPEKLERARSAFIDEMQRVADLGLQLLNFHPGSHLKEISEEASLLLIAESINMALEATNGVTAVIENTAGQGTNLGYRFEQIAFLIDRIEDKSRVGVCLDTCHLFASGYDLSSTEAIETTFNEFDSTVGLHYLRGMHLNDAMQPLGSRVDRHASLGKGTIGMAAFTFIMNHPACEEIPLILETPNPDIWSEEIALLYSLQQVD</sequence>
<protein>
    <recommendedName>
        <fullName evidence="1">Probable endonuclease 4</fullName>
        <ecNumber evidence="1">3.1.21.2</ecNumber>
    </recommendedName>
    <alternativeName>
        <fullName evidence="1">Endodeoxyribonuclease IV</fullName>
    </alternativeName>
    <alternativeName>
        <fullName evidence="1">Endonuclease IV</fullName>
    </alternativeName>
</protein>